<accession>Q9M1Y3</accession>
<dbReference type="EMBL" id="AL138647">
    <property type="protein sequence ID" value="CAB75810.1"/>
    <property type="molecule type" value="Genomic_DNA"/>
</dbReference>
<dbReference type="EMBL" id="CP002686">
    <property type="protein sequence ID" value="AEE79984.1"/>
    <property type="molecule type" value="Genomic_DNA"/>
</dbReference>
<dbReference type="EMBL" id="CP002686">
    <property type="protein sequence ID" value="ANM65034.1"/>
    <property type="molecule type" value="Genomic_DNA"/>
</dbReference>
<dbReference type="EMBL" id="AY099865">
    <property type="protein sequence ID" value="AAM20716.1"/>
    <property type="molecule type" value="mRNA"/>
</dbReference>
<dbReference type="EMBL" id="BT008381">
    <property type="protein sequence ID" value="AAP37740.1"/>
    <property type="molecule type" value="mRNA"/>
</dbReference>
<dbReference type="PIR" id="T47815">
    <property type="entry name" value="T47815"/>
</dbReference>
<dbReference type="RefSeq" id="NP_001327032.1">
    <property type="nucleotide sequence ID" value="NM_001340005.1"/>
</dbReference>
<dbReference type="RefSeq" id="NP_191550.1">
    <property type="nucleotide sequence ID" value="NM_115854.5"/>
</dbReference>
<dbReference type="SMR" id="Q9M1Y3"/>
<dbReference type="BioGRID" id="10475">
    <property type="interactions" value="2"/>
</dbReference>
<dbReference type="FunCoup" id="Q9M1Y3">
    <property type="interactions" value="1755"/>
</dbReference>
<dbReference type="IntAct" id="Q9M1Y3">
    <property type="interactions" value="3"/>
</dbReference>
<dbReference type="STRING" id="3702.Q9M1Y3"/>
<dbReference type="iPTMnet" id="Q9M1Y3"/>
<dbReference type="PaxDb" id="3702-AT3G59910.1"/>
<dbReference type="EnsemblPlants" id="AT3G59910.1">
    <property type="protein sequence ID" value="AT3G59910.1"/>
    <property type="gene ID" value="AT3G59910"/>
</dbReference>
<dbReference type="EnsemblPlants" id="AT3G59910.2">
    <property type="protein sequence ID" value="AT3G59910.2"/>
    <property type="gene ID" value="AT3G59910"/>
</dbReference>
<dbReference type="GeneID" id="825161"/>
<dbReference type="Gramene" id="AT3G59910.1">
    <property type="protein sequence ID" value="AT3G59910.1"/>
    <property type="gene ID" value="AT3G59910"/>
</dbReference>
<dbReference type="Gramene" id="AT3G59910.2">
    <property type="protein sequence ID" value="AT3G59910.2"/>
    <property type="gene ID" value="AT3G59910"/>
</dbReference>
<dbReference type="KEGG" id="ath:AT3G59910"/>
<dbReference type="Araport" id="AT3G59910"/>
<dbReference type="TAIR" id="AT3G59910"/>
<dbReference type="eggNOG" id="ENOG502QRVR">
    <property type="taxonomic scope" value="Eukaryota"/>
</dbReference>
<dbReference type="HOGENOM" id="CLU_021673_0_0_1"/>
<dbReference type="InParanoid" id="Q9M1Y3"/>
<dbReference type="OMA" id="MRESHDD"/>
<dbReference type="PhylomeDB" id="Q9M1Y3"/>
<dbReference type="PRO" id="PR:Q9M1Y3"/>
<dbReference type="Proteomes" id="UP000006548">
    <property type="component" value="Chromosome 3"/>
</dbReference>
<dbReference type="ExpressionAtlas" id="Q9M1Y3">
    <property type="expression patterns" value="baseline and differential"/>
</dbReference>
<dbReference type="Gene3D" id="1.25.40.20">
    <property type="entry name" value="Ankyrin repeat-containing domain"/>
    <property type="match status" value="1"/>
</dbReference>
<dbReference type="InterPro" id="IPR036770">
    <property type="entry name" value="Ankyrin_rpt-contain_sf"/>
</dbReference>
<dbReference type="InterPro" id="IPR044956">
    <property type="entry name" value="SKIP35"/>
</dbReference>
<dbReference type="PANTHER" id="PTHR36024">
    <property type="entry name" value="ANKYRIN REPEAT PROTEIN SKIP35"/>
    <property type="match status" value="1"/>
</dbReference>
<dbReference type="PANTHER" id="PTHR36024:SF5">
    <property type="entry name" value="ANKYRIN REPEAT PROTEIN SKIP35"/>
    <property type="match status" value="1"/>
</dbReference>
<dbReference type="SUPFAM" id="SSF48403">
    <property type="entry name" value="Ankyrin repeat"/>
    <property type="match status" value="1"/>
</dbReference>
<feature type="chain" id="PRO_0000375234" description="Ankyrin repeat protein SKIP35">
    <location>
        <begin position="1"/>
        <end position="611"/>
    </location>
</feature>
<feature type="repeat" description="ANK 1">
    <location>
        <begin position="292"/>
        <end position="322"/>
    </location>
</feature>
<feature type="repeat" description="ANK 2">
    <location>
        <begin position="323"/>
        <end position="353"/>
    </location>
</feature>
<feature type="repeat" description="ANK 3">
    <location>
        <begin position="356"/>
        <end position="384"/>
    </location>
</feature>
<feature type="repeat" description="ANK 4">
    <location>
        <begin position="385"/>
        <end position="414"/>
    </location>
</feature>
<feature type="repeat" description="ANK 5">
    <location>
        <begin position="416"/>
        <end position="442"/>
    </location>
</feature>
<feature type="repeat" description="ANK 6">
    <location>
        <begin position="445"/>
        <end position="478"/>
    </location>
</feature>
<protein>
    <recommendedName>
        <fullName>Ankyrin repeat protein SKIP35</fullName>
    </recommendedName>
    <alternativeName>
        <fullName>SKP1-interacting partner 35</fullName>
    </alternativeName>
</protein>
<reference key="1">
    <citation type="journal article" date="2000" name="Nature">
        <title>Sequence and analysis of chromosome 3 of the plant Arabidopsis thaliana.</title>
        <authorList>
            <person name="Salanoubat M."/>
            <person name="Lemcke K."/>
            <person name="Rieger M."/>
            <person name="Ansorge W."/>
            <person name="Unseld M."/>
            <person name="Fartmann B."/>
            <person name="Valle G."/>
            <person name="Bloecker H."/>
            <person name="Perez-Alonso M."/>
            <person name="Obermaier B."/>
            <person name="Delseny M."/>
            <person name="Boutry M."/>
            <person name="Grivell L.A."/>
            <person name="Mache R."/>
            <person name="Puigdomenech P."/>
            <person name="De Simone V."/>
            <person name="Choisne N."/>
            <person name="Artiguenave F."/>
            <person name="Robert C."/>
            <person name="Brottier P."/>
            <person name="Wincker P."/>
            <person name="Cattolico L."/>
            <person name="Weissenbach J."/>
            <person name="Saurin W."/>
            <person name="Quetier F."/>
            <person name="Schaefer M."/>
            <person name="Mueller-Auer S."/>
            <person name="Gabel C."/>
            <person name="Fuchs M."/>
            <person name="Benes V."/>
            <person name="Wurmbach E."/>
            <person name="Drzonek H."/>
            <person name="Erfle H."/>
            <person name="Jordan N."/>
            <person name="Bangert S."/>
            <person name="Wiedelmann R."/>
            <person name="Kranz H."/>
            <person name="Voss H."/>
            <person name="Holland R."/>
            <person name="Brandt P."/>
            <person name="Nyakatura G."/>
            <person name="Vezzi A."/>
            <person name="D'Angelo M."/>
            <person name="Pallavicini A."/>
            <person name="Toppo S."/>
            <person name="Simionati B."/>
            <person name="Conrad A."/>
            <person name="Hornischer K."/>
            <person name="Kauer G."/>
            <person name="Loehnert T.-H."/>
            <person name="Nordsiek G."/>
            <person name="Reichelt J."/>
            <person name="Scharfe M."/>
            <person name="Schoen O."/>
            <person name="Bargues M."/>
            <person name="Terol J."/>
            <person name="Climent J."/>
            <person name="Navarro P."/>
            <person name="Collado C."/>
            <person name="Perez-Perez A."/>
            <person name="Ottenwaelder B."/>
            <person name="Duchemin D."/>
            <person name="Cooke R."/>
            <person name="Laudie M."/>
            <person name="Berger-Llauro C."/>
            <person name="Purnelle B."/>
            <person name="Masuy D."/>
            <person name="de Haan M."/>
            <person name="Maarse A.C."/>
            <person name="Alcaraz J.-P."/>
            <person name="Cottet A."/>
            <person name="Casacuberta E."/>
            <person name="Monfort A."/>
            <person name="Argiriou A."/>
            <person name="Flores M."/>
            <person name="Liguori R."/>
            <person name="Vitale D."/>
            <person name="Mannhaupt G."/>
            <person name="Haase D."/>
            <person name="Schoof H."/>
            <person name="Rudd S."/>
            <person name="Zaccaria P."/>
            <person name="Mewes H.-W."/>
            <person name="Mayer K.F.X."/>
            <person name="Kaul S."/>
            <person name="Town C.D."/>
            <person name="Koo H.L."/>
            <person name="Tallon L.J."/>
            <person name="Jenkins J."/>
            <person name="Rooney T."/>
            <person name="Rizzo M."/>
            <person name="Walts A."/>
            <person name="Utterback T."/>
            <person name="Fujii C.Y."/>
            <person name="Shea T.P."/>
            <person name="Creasy T.H."/>
            <person name="Haas B."/>
            <person name="Maiti R."/>
            <person name="Wu D."/>
            <person name="Peterson J."/>
            <person name="Van Aken S."/>
            <person name="Pai G."/>
            <person name="Militscher J."/>
            <person name="Sellers P."/>
            <person name="Gill J.E."/>
            <person name="Feldblyum T.V."/>
            <person name="Preuss D."/>
            <person name="Lin X."/>
            <person name="Nierman W.C."/>
            <person name="Salzberg S.L."/>
            <person name="White O."/>
            <person name="Venter J.C."/>
            <person name="Fraser C.M."/>
            <person name="Kaneko T."/>
            <person name="Nakamura Y."/>
            <person name="Sato S."/>
            <person name="Kato T."/>
            <person name="Asamizu E."/>
            <person name="Sasamoto S."/>
            <person name="Kimura T."/>
            <person name="Idesawa K."/>
            <person name="Kawashima K."/>
            <person name="Kishida Y."/>
            <person name="Kiyokawa C."/>
            <person name="Kohara M."/>
            <person name="Matsumoto M."/>
            <person name="Matsuno A."/>
            <person name="Muraki A."/>
            <person name="Nakayama S."/>
            <person name="Nakazaki N."/>
            <person name="Shinpo S."/>
            <person name="Takeuchi C."/>
            <person name="Wada T."/>
            <person name="Watanabe A."/>
            <person name="Yamada M."/>
            <person name="Yasuda M."/>
            <person name="Tabata S."/>
        </authorList>
    </citation>
    <scope>NUCLEOTIDE SEQUENCE [LARGE SCALE GENOMIC DNA]</scope>
    <source>
        <strain>cv. Columbia</strain>
    </source>
</reference>
<reference key="2">
    <citation type="journal article" date="2017" name="Plant J.">
        <title>Araport11: a complete reannotation of the Arabidopsis thaliana reference genome.</title>
        <authorList>
            <person name="Cheng C.Y."/>
            <person name="Krishnakumar V."/>
            <person name="Chan A.P."/>
            <person name="Thibaud-Nissen F."/>
            <person name="Schobel S."/>
            <person name="Town C.D."/>
        </authorList>
    </citation>
    <scope>GENOME REANNOTATION</scope>
    <source>
        <strain>cv. Columbia</strain>
    </source>
</reference>
<reference key="3">
    <citation type="journal article" date="2003" name="Science">
        <title>Empirical analysis of transcriptional activity in the Arabidopsis genome.</title>
        <authorList>
            <person name="Yamada K."/>
            <person name="Lim J."/>
            <person name="Dale J.M."/>
            <person name="Chen H."/>
            <person name="Shinn P."/>
            <person name="Palm C.J."/>
            <person name="Southwick A.M."/>
            <person name="Wu H.C."/>
            <person name="Kim C.J."/>
            <person name="Nguyen M."/>
            <person name="Pham P.K."/>
            <person name="Cheuk R.F."/>
            <person name="Karlin-Newmann G."/>
            <person name="Liu S.X."/>
            <person name="Lam B."/>
            <person name="Sakano H."/>
            <person name="Wu T."/>
            <person name="Yu G."/>
            <person name="Miranda M."/>
            <person name="Quach H.L."/>
            <person name="Tripp M."/>
            <person name="Chang C.H."/>
            <person name="Lee J.M."/>
            <person name="Toriumi M.J."/>
            <person name="Chan M.M."/>
            <person name="Tang C.C."/>
            <person name="Onodera C.S."/>
            <person name="Deng J.M."/>
            <person name="Akiyama K."/>
            <person name="Ansari Y."/>
            <person name="Arakawa T."/>
            <person name="Banh J."/>
            <person name="Banno F."/>
            <person name="Bowser L."/>
            <person name="Brooks S.Y."/>
            <person name="Carninci P."/>
            <person name="Chao Q."/>
            <person name="Choy N."/>
            <person name="Enju A."/>
            <person name="Goldsmith A.D."/>
            <person name="Gurjal M."/>
            <person name="Hansen N.F."/>
            <person name="Hayashizaki Y."/>
            <person name="Johnson-Hopson C."/>
            <person name="Hsuan V.W."/>
            <person name="Iida K."/>
            <person name="Karnes M."/>
            <person name="Khan S."/>
            <person name="Koesema E."/>
            <person name="Ishida J."/>
            <person name="Jiang P.X."/>
            <person name="Jones T."/>
            <person name="Kawai J."/>
            <person name="Kamiya A."/>
            <person name="Meyers C."/>
            <person name="Nakajima M."/>
            <person name="Narusaka M."/>
            <person name="Seki M."/>
            <person name="Sakurai T."/>
            <person name="Satou M."/>
            <person name="Tamse R."/>
            <person name="Vaysberg M."/>
            <person name="Wallender E.K."/>
            <person name="Wong C."/>
            <person name="Yamamura Y."/>
            <person name="Yuan S."/>
            <person name="Shinozaki K."/>
            <person name="Davis R.W."/>
            <person name="Theologis A."/>
            <person name="Ecker J.R."/>
        </authorList>
    </citation>
    <scope>NUCLEOTIDE SEQUENCE [LARGE SCALE MRNA]</scope>
    <source>
        <strain>cv. Columbia</strain>
    </source>
</reference>
<reference key="4">
    <citation type="journal article" date="2003" name="Plant J.">
        <title>Protein interaction analysis of SCF ubiquitin E3 ligase subunits from Arabidopsis.</title>
        <authorList>
            <person name="Risseeuw E.P."/>
            <person name="Daskalchuk T.E."/>
            <person name="Banks T.W."/>
            <person name="Liu E."/>
            <person name="Cotelesage J."/>
            <person name="Hellmann H."/>
            <person name="Estelle M."/>
            <person name="Somers D.E."/>
            <person name="Crosby W.L."/>
        </authorList>
    </citation>
    <scope>INTERACTION WITH SKP1A/ASK1</scope>
</reference>
<comment type="subunit">
    <text evidence="1">Interacts with SKP1A/ASK1.</text>
</comment>
<comment type="interaction">
    <interactant intactId="EBI-604645">
        <id>Q9M1Y3</id>
    </interactant>
    <interactant intactId="EBI-4426557">
        <id>Q84MB2</id>
        <label>TIFY8</label>
    </interactant>
    <organismsDiffer>false</organismsDiffer>
    <experiments>3</experiments>
</comment>
<proteinExistence type="evidence at protein level"/>
<keyword id="KW-0040">ANK repeat</keyword>
<keyword id="KW-1185">Reference proteome</keyword>
<keyword id="KW-0677">Repeat</keyword>
<name>SKI35_ARATH</name>
<organism>
    <name type="scientific">Arabidopsis thaliana</name>
    <name type="common">Mouse-ear cress</name>
    <dbReference type="NCBI Taxonomy" id="3702"/>
    <lineage>
        <taxon>Eukaryota</taxon>
        <taxon>Viridiplantae</taxon>
        <taxon>Streptophyta</taxon>
        <taxon>Embryophyta</taxon>
        <taxon>Tracheophyta</taxon>
        <taxon>Spermatophyta</taxon>
        <taxon>Magnoliopsida</taxon>
        <taxon>eudicotyledons</taxon>
        <taxon>Gunneridae</taxon>
        <taxon>Pentapetalae</taxon>
        <taxon>rosids</taxon>
        <taxon>malvids</taxon>
        <taxon>Brassicales</taxon>
        <taxon>Brassicaceae</taxon>
        <taxon>Camelineae</taxon>
        <taxon>Arabidopsis</taxon>
    </lineage>
</organism>
<sequence>MEKEGVCDTINLSDQMYPDEPFCSEMKTETIASSQKFEGGEGSKVVFSREAPLIGKDSAGTNSGECCGCSAKKLNFKGDDDLVEKENIEQQKKLNRQERIELGRLFQGAVTSLDWELAERLIQLADPQTLNDLLCVGLDSVWFLSTKPEFQGITGLIKKIICHGAHDFTRATLRTSFLASCVSACQSRTMSLSDTVTVMAQRLHERLQECNGDEILKAEAGAKVQKFTEWALKCIGFHSRCQGAKDRVSQNSAAEIELQLSAFKMFLDLAGNHLSGRDFTEAFDAACFPLTLFSNSFDPGWASGMSATVIQGLLGMLVEGGADNVNQCFLEASRFGSTELVRVLLQIAQRNSLDVDVDLALGFASHYCKIGTMKCLVEEGNAIAFLGPLMRAAERGCMQVVQWFVKRGCRDMELCLALTAATSSCQVEVAAYLLPRVPPPVLTALSIEILKAAGERSGGSLQGVEFLLKSDFLGDSTATYSVADSIARSSEDESVPSDLKSFLQEHWSESAFEKGMRESHDDFMNFMRVLKKGESAISLRDLPAPLRVAIAYMPLYRECMKADGRLLSQRLRGQLVEAVRQLQGCAVAVVEVSQTRNLMAVLEHHLTAIFD</sequence>
<evidence type="ECO:0000269" key="1">
    <source>
    </source>
</evidence>
<gene>
    <name type="primary">SKIP35</name>
    <name type="ordered locus">At3g59910</name>
    <name type="ORF">F24G16.180</name>
</gene>